<protein>
    <recommendedName>
        <fullName evidence="1">Iron-sulfur cluster carrier protein</fullName>
    </recommendedName>
</protein>
<sequence length="318" mass="35466">MANLHQQQIIDKIQNITFKDGTFLNEVISDIIIKGNNIGFSIDISGKNKLEAEEIRLKAINELNNIKDVNNITIVFTQKKTIDKKAQKPKHFVENVKKIILVASGKGGVGKSTISALIAQQLSLENYQVGIVDADIYGPSIPHIFGINEIPKTVEGRIIPILAQNIQIISIGFFVKAHSAIIYRGPMASKIIYQLLSNTRWNNLDYLIIDMPPGTGDIHLSMLENYHLDGVIVVTTPQKISEIDVIRSIDLYRKLGLPILGIIENMIYMLESDRCGHLSKKYNIPLIAKIPIIPQIANACDKSLPLTNLLTLPLEKYL</sequence>
<organism>
    <name type="scientific">Rickettsia typhi (strain ATCC VR-144 / Wilmington)</name>
    <dbReference type="NCBI Taxonomy" id="257363"/>
    <lineage>
        <taxon>Bacteria</taxon>
        <taxon>Pseudomonadati</taxon>
        <taxon>Pseudomonadota</taxon>
        <taxon>Alphaproteobacteria</taxon>
        <taxon>Rickettsiales</taxon>
        <taxon>Rickettsiaceae</taxon>
        <taxon>Rickettsieae</taxon>
        <taxon>Rickettsia</taxon>
        <taxon>typhus group</taxon>
    </lineage>
</organism>
<accession>Q68XP6</accession>
<feature type="chain" id="PRO_0000281001" description="Iron-sulfur cluster carrier protein">
    <location>
        <begin position="1"/>
        <end position="318"/>
    </location>
</feature>
<feature type="binding site" evidence="1">
    <location>
        <begin position="105"/>
        <end position="112"/>
    </location>
    <ligand>
        <name>ATP</name>
        <dbReference type="ChEBI" id="CHEBI:30616"/>
    </ligand>
</feature>
<comment type="function">
    <text evidence="1">Binds and transfers iron-sulfur (Fe-S) clusters to target apoproteins. Can hydrolyze ATP.</text>
</comment>
<comment type="subunit">
    <text evidence="1">Homodimer.</text>
</comment>
<comment type="similarity">
    <text evidence="1">Belongs to the Mrp/NBP35 ATP-binding proteins family.</text>
</comment>
<reference key="1">
    <citation type="journal article" date="2004" name="J. Bacteriol.">
        <title>Complete genome sequence of Rickettsia typhi and comparison with sequences of other Rickettsiae.</title>
        <authorList>
            <person name="McLeod M.P."/>
            <person name="Qin X."/>
            <person name="Karpathy S.E."/>
            <person name="Gioia J."/>
            <person name="Highlander S.K."/>
            <person name="Fox G.E."/>
            <person name="McNeill T.Z."/>
            <person name="Jiang H."/>
            <person name="Muzny D."/>
            <person name="Jacob L.S."/>
            <person name="Hawes A.C."/>
            <person name="Sodergren E."/>
            <person name="Gill R."/>
            <person name="Hume J."/>
            <person name="Morgan M."/>
            <person name="Fan G."/>
            <person name="Amin A.G."/>
            <person name="Gibbs R.A."/>
            <person name="Hong C."/>
            <person name="Yu X.-J."/>
            <person name="Walker D.H."/>
            <person name="Weinstock G.M."/>
        </authorList>
    </citation>
    <scope>NUCLEOTIDE SEQUENCE [LARGE SCALE GENOMIC DNA]</scope>
    <source>
        <strain>ATCC VR-144 / Wilmington</strain>
    </source>
</reference>
<name>APBC_RICTY</name>
<gene>
    <name type="primary">mrp</name>
    <name type="ordered locus">RT0110</name>
</gene>
<keyword id="KW-0067">ATP-binding</keyword>
<keyword id="KW-0378">Hydrolase</keyword>
<keyword id="KW-0408">Iron</keyword>
<keyword id="KW-0411">Iron-sulfur</keyword>
<keyword id="KW-0479">Metal-binding</keyword>
<keyword id="KW-0547">Nucleotide-binding</keyword>
<dbReference type="EMBL" id="AE017197">
    <property type="protein sequence ID" value="AAU03596.1"/>
    <property type="molecule type" value="Genomic_DNA"/>
</dbReference>
<dbReference type="RefSeq" id="WP_011190583.1">
    <property type="nucleotide sequence ID" value="NC_006142.1"/>
</dbReference>
<dbReference type="SMR" id="Q68XP6"/>
<dbReference type="KEGG" id="rty:RT0110"/>
<dbReference type="eggNOG" id="COG0489">
    <property type="taxonomic scope" value="Bacteria"/>
</dbReference>
<dbReference type="HOGENOM" id="CLU_024839_0_0_5"/>
<dbReference type="OrthoDB" id="9809679at2"/>
<dbReference type="Proteomes" id="UP000000604">
    <property type="component" value="Chromosome"/>
</dbReference>
<dbReference type="GO" id="GO:0051539">
    <property type="term" value="F:4 iron, 4 sulfur cluster binding"/>
    <property type="evidence" value="ECO:0007669"/>
    <property type="project" value="TreeGrafter"/>
</dbReference>
<dbReference type="GO" id="GO:0005524">
    <property type="term" value="F:ATP binding"/>
    <property type="evidence" value="ECO:0007669"/>
    <property type="project" value="UniProtKB-UniRule"/>
</dbReference>
<dbReference type="GO" id="GO:0016887">
    <property type="term" value="F:ATP hydrolysis activity"/>
    <property type="evidence" value="ECO:0007669"/>
    <property type="project" value="UniProtKB-UniRule"/>
</dbReference>
<dbReference type="GO" id="GO:0140663">
    <property type="term" value="F:ATP-dependent FeS chaperone activity"/>
    <property type="evidence" value="ECO:0007669"/>
    <property type="project" value="InterPro"/>
</dbReference>
<dbReference type="GO" id="GO:0046872">
    <property type="term" value="F:metal ion binding"/>
    <property type="evidence" value="ECO:0007669"/>
    <property type="project" value="UniProtKB-KW"/>
</dbReference>
<dbReference type="GO" id="GO:0016226">
    <property type="term" value="P:iron-sulfur cluster assembly"/>
    <property type="evidence" value="ECO:0007669"/>
    <property type="project" value="InterPro"/>
</dbReference>
<dbReference type="CDD" id="cd02037">
    <property type="entry name" value="Mrp_NBP35"/>
    <property type="match status" value="1"/>
</dbReference>
<dbReference type="Gene3D" id="3.40.50.300">
    <property type="entry name" value="P-loop containing nucleotide triphosphate hydrolases"/>
    <property type="match status" value="1"/>
</dbReference>
<dbReference type="HAMAP" id="MF_02040">
    <property type="entry name" value="Mrp_NBP35"/>
    <property type="match status" value="1"/>
</dbReference>
<dbReference type="InterPro" id="IPR000808">
    <property type="entry name" value="Mrp-like_CS"/>
</dbReference>
<dbReference type="InterPro" id="IPR019591">
    <property type="entry name" value="Mrp/NBP35_ATP-bd"/>
</dbReference>
<dbReference type="InterPro" id="IPR044304">
    <property type="entry name" value="NUBPL-like"/>
</dbReference>
<dbReference type="InterPro" id="IPR027417">
    <property type="entry name" value="P-loop_NTPase"/>
</dbReference>
<dbReference type="InterPro" id="IPR033756">
    <property type="entry name" value="YlxH/NBP35"/>
</dbReference>
<dbReference type="PANTHER" id="PTHR42961">
    <property type="entry name" value="IRON-SULFUR PROTEIN NUBPL"/>
    <property type="match status" value="1"/>
</dbReference>
<dbReference type="PANTHER" id="PTHR42961:SF2">
    <property type="entry name" value="IRON-SULFUR PROTEIN NUBPL"/>
    <property type="match status" value="1"/>
</dbReference>
<dbReference type="Pfam" id="PF10609">
    <property type="entry name" value="ParA"/>
    <property type="match status" value="1"/>
</dbReference>
<dbReference type="SUPFAM" id="SSF52540">
    <property type="entry name" value="P-loop containing nucleoside triphosphate hydrolases"/>
    <property type="match status" value="1"/>
</dbReference>
<dbReference type="PROSITE" id="PS01215">
    <property type="entry name" value="MRP"/>
    <property type="match status" value="1"/>
</dbReference>
<proteinExistence type="inferred from homology"/>
<evidence type="ECO:0000255" key="1">
    <source>
        <dbReference type="HAMAP-Rule" id="MF_02040"/>
    </source>
</evidence>